<proteinExistence type="inferred from homology"/>
<accession>C1D7H3</accession>
<gene>
    <name type="ordered locus">LHK_01423</name>
</gene>
<feature type="chain" id="PRO_1000147308" description="Nucleotide-binding protein LHK_01423">
    <location>
        <begin position="1"/>
        <end position="161"/>
    </location>
</feature>
<organism>
    <name type="scientific">Laribacter hongkongensis (strain HLHK9)</name>
    <dbReference type="NCBI Taxonomy" id="557598"/>
    <lineage>
        <taxon>Bacteria</taxon>
        <taxon>Pseudomonadati</taxon>
        <taxon>Pseudomonadota</taxon>
        <taxon>Betaproteobacteria</taxon>
        <taxon>Neisseriales</taxon>
        <taxon>Aquaspirillaceae</taxon>
        <taxon>Laribacter</taxon>
    </lineage>
</organism>
<protein>
    <recommendedName>
        <fullName evidence="1">Nucleotide-binding protein LHK_01423</fullName>
    </recommendedName>
</protein>
<dbReference type="EMBL" id="CP001154">
    <property type="protein sequence ID" value="ACO74413.1"/>
    <property type="molecule type" value="Genomic_DNA"/>
</dbReference>
<dbReference type="RefSeq" id="WP_012696899.1">
    <property type="nucleotide sequence ID" value="NC_012559.1"/>
</dbReference>
<dbReference type="SMR" id="C1D7H3"/>
<dbReference type="STRING" id="557598.LHK_01423"/>
<dbReference type="KEGG" id="lhk:LHK_01423"/>
<dbReference type="eggNOG" id="COG1666">
    <property type="taxonomic scope" value="Bacteria"/>
</dbReference>
<dbReference type="HOGENOM" id="CLU_099839_1_0_4"/>
<dbReference type="Proteomes" id="UP000002010">
    <property type="component" value="Chromosome"/>
</dbReference>
<dbReference type="GO" id="GO:0005829">
    <property type="term" value="C:cytosol"/>
    <property type="evidence" value="ECO:0007669"/>
    <property type="project" value="TreeGrafter"/>
</dbReference>
<dbReference type="GO" id="GO:0000166">
    <property type="term" value="F:nucleotide binding"/>
    <property type="evidence" value="ECO:0007669"/>
    <property type="project" value="TreeGrafter"/>
</dbReference>
<dbReference type="CDD" id="cd11740">
    <property type="entry name" value="YajQ_like"/>
    <property type="match status" value="1"/>
</dbReference>
<dbReference type="Gene3D" id="3.30.70.860">
    <property type="match status" value="1"/>
</dbReference>
<dbReference type="Gene3D" id="3.30.70.990">
    <property type="entry name" value="YajQ-like, domain 2"/>
    <property type="match status" value="1"/>
</dbReference>
<dbReference type="HAMAP" id="MF_00632">
    <property type="entry name" value="YajQ"/>
    <property type="match status" value="1"/>
</dbReference>
<dbReference type="InterPro" id="IPR007551">
    <property type="entry name" value="DUF520"/>
</dbReference>
<dbReference type="InterPro" id="IPR035571">
    <property type="entry name" value="UPF0234-like_C"/>
</dbReference>
<dbReference type="InterPro" id="IPR035570">
    <property type="entry name" value="UPF0234_N"/>
</dbReference>
<dbReference type="InterPro" id="IPR036183">
    <property type="entry name" value="YajQ-like_sf"/>
</dbReference>
<dbReference type="NCBIfam" id="NF003819">
    <property type="entry name" value="PRK05412.1"/>
    <property type="match status" value="1"/>
</dbReference>
<dbReference type="PANTHER" id="PTHR30476">
    <property type="entry name" value="UPF0234 PROTEIN YAJQ"/>
    <property type="match status" value="1"/>
</dbReference>
<dbReference type="PANTHER" id="PTHR30476:SF0">
    <property type="entry name" value="UPF0234 PROTEIN YAJQ"/>
    <property type="match status" value="1"/>
</dbReference>
<dbReference type="Pfam" id="PF04461">
    <property type="entry name" value="DUF520"/>
    <property type="match status" value="1"/>
</dbReference>
<dbReference type="SUPFAM" id="SSF89963">
    <property type="entry name" value="YajQ-like"/>
    <property type="match status" value="2"/>
</dbReference>
<keyword id="KW-0547">Nucleotide-binding</keyword>
<keyword id="KW-1185">Reference proteome</keyword>
<evidence type="ECO:0000255" key="1">
    <source>
        <dbReference type="HAMAP-Rule" id="MF_00632"/>
    </source>
</evidence>
<reference key="1">
    <citation type="journal article" date="2009" name="PLoS Genet.">
        <title>The complete genome and proteome of Laribacter hongkongensis reveal potential mechanisms for adaptations to different temperatures and habitats.</title>
        <authorList>
            <person name="Woo P.C.Y."/>
            <person name="Lau S.K.P."/>
            <person name="Tse H."/>
            <person name="Teng J.L.L."/>
            <person name="Curreem S.O."/>
            <person name="Tsang A.K.L."/>
            <person name="Fan R.Y.Y."/>
            <person name="Wong G.K.M."/>
            <person name="Huang Y."/>
            <person name="Loman N.J."/>
            <person name="Snyder L.A.S."/>
            <person name="Cai J.J."/>
            <person name="Huang J.-D."/>
            <person name="Mak W."/>
            <person name="Pallen M.J."/>
            <person name="Lok S."/>
            <person name="Yuen K.-Y."/>
        </authorList>
    </citation>
    <scope>NUCLEOTIDE SEQUENCE [LARGE SCALE GENOMIC DNA]</scope>
    <source>
        <strain>HLHK9</strain>
    </source>
</reference>
<comment type="function">
    <text evidence="1">Nucleotide-binding protein.</text>
</comment>
<comment type="similarity">
    <text evidence="1">Belongs to the YajQ family.</text>
</comment>
<name>Y1423_LARHH</name>
<sequence length="161" mass="18093">MPSFDIVSEVNLVEVKNALDQSNKEITNRYDFKGSDARVELADKIMTAYADSDFQLDQVKDVLLGKLAKRDVDVRCLDYAKVEKVSGNKVKQAITVKVGVETDLAKKLVRLIKDSKLKVQASIQGDAVRVSGAKRDVLQETIAMVRKEITDFPLQFNNFRE</sequence>